<reference key="1">
    <citation type="journal article" date="2009" name="Proc. Natl. Acad. Sci. U.S.A.">
        <title>The mosaic genome structure of the Wolbachia wRi strain infecting Drosophila simulans.</title>
        <authorList>
            <person name="Klasson L."/>
            <person name="Westberg J."/>
            <person name="Sapountzis P."/>
            <person name="Naeslund K."/>
            <person name="Lutnaes Y."/>
            <person name="Darby A.C."/>
            <person name="Veneti Z."/>
            <person name="Chen L."/>
            <person name="Braig H.R."/>
            <person name="Garrett R."/>
            <person name="Bourtzis K."/>
            <person name="Andersson S.G."/>
        </authorList>
    </citation>
    <scope>NUCLEOTIDE SEQUENCE [LARGE SCALE GENOMIC DNA]</scope>
    <source>
        <strain>wRi</strain>
    </source>
</reference>
<name>LEPA_WOLWR</name>
<feature type="chain" id="PRO_1000190838" description="Elongation factor 4">
    <location>
        <begin position="1"/>
        <end position="598"/>
    </location>
</feature>
<feature type="domain" description="tr-type G">
    <location>
        <begin position="2"/>
        <end position="184"/>
    </location>
</feature>
<feature type="binding site" evidence="1">
    <location>
        <begin position="14"/>
        <end position="19"/>
    </location>
    <ligand>
        <name>GTP</name>
        <dbReference type="ChEBI" id="CHEBI:37565"/>
    </ligand>
</feature>
<feature type="binding site" evidence="1">
    <location>
        <begin position="131"/>
        <end position="134"/>
    </location>
    <ligand>
        <name>GTP</name>
        <dbReference type="ChEBI" id="CHEBI:37565"/>
    </ligand>
</feature>
<protein>
    <recommendedName>
        <fullName evidence="1">Elongation factor 4</fullName>
        <shortName evidence="1">EF-4</shortName>
        <ecNumber evidence="1">3.6.5.n1</ecNumber>
    </recommendedName>
    <alternativeName>
        <fullName evidence="1">Ribosomal back-translocase LepA</fullName>
    </alternativeName>
</protein>
<proteinExistence type="inferred from homology"/>
<sequence length="598" mass="66557">MNNIRNFAIIAHIDHGKSTLADRLIEECNGLEAREMINQILDSMDIERERGITIKAQTVKLNYTANDGNQYCLNLMDTPGHVDFSYEVSRSLAACEGSLLVVDSSQGVEAQTLANVYKAIDNNHEIIVVLNKVDLPAADPEKVKLQVEEVIGIDASESVLISAKTGLGIKDVLEAIVAKLPAPQGDVNAPLQAILVDSWYDTYLGVVILVRVKNGVLKKGMKIVMMSNNATYQIDNIGIFTPKKVMTGELSAGEVGFITASMKEVADCKVGDTITEEKRPCSEALPGFKEVHPVVFCSIFPHKTDDFKYLREALEKLHLNDASFTFEAETSNALGYGFRCGFLGMLHLEVIQERLEREFDLDLTATAPSVIYRVTTRSGEILNIHNPSDMPDPTKIEIVEEPWITATIMVPDQYLGEILSLCEERRGEQEDLSYIGNTTTALLRYKLPLSEVVFDFYDRLKSISKGYASLDWEISSYLVSQIDKLSFLINGEPVDALACIVHKSRAEKRGREICARLKDLIPRQQYKIAIQAAVGGKIIARETINPYRKDVTAKLYGGDVTRRMKLLEKQKKGKKRLHSIGNVNIPQNAFIQALKISD</sequence>
<evidence type="ECO:0000255" key="1">
    <source>
        <dbReference type="HAMAP-Rule" id="MF_00071"/>
    </source>
</evidence>
<gene>
    <name evidence="1" type="primary">lepA</name>
    <name type="ordered locus">WRi_002950</name>
</gene>
<comment type="function">
    <text evidence="1">Required for accurate and efficient protein synthesis under certain stress conditions. May act as a fidelity factor of the translation reaction, by catalyzing a one-codon backward translocation of tRNAs on improperly translocated ribosomes. Back-translocation proceeds from a post-translocation (POST) complex to a pre-translocation (PRE) complex, thus giving elongation factor G a second chance to translocate the tRNAs correctly. Binds to ribosomes in a GTP-dependent manner.</text>
</comment>
<comment type="catalytic activity">
    <reaction evidence="1">
        <text>GTP + H2O = GDP + phosphate + H(+)</text>
        <dbReference type="Rhea" id="RHEA:19669"/>
        <dbReference type="ChEBI" id="CHEBI:15377"/>
        <dbReference type="ChEBI" id="CHEBI:15378"/>
        <dbReference type="ChEBI" id="CHEBI:37565"/>
        <dbReference type="ChEBI" id="CHEBI:43474"/>
        <dbReference type="ChEBI" id="CHEBI:58189"/>
        <dbReference type="EC" id="3.6.5.n1"/>
    </reaction>
</comment>
<comment type="subcellular location">
    <subcellularLocation>
        <location evidence="1">Cell membrane</location>
        <topology evidence="1">Peripheral membrane protein</topology>
        <orientation evidence="1">Cytoplasmic side</orientation>
    </subcellularLocation>
</comment>
<comment type="similarity">
    <text evidence="1">Belongs to the TRAFAC class translation factor GTPase superfamily. Classic translation factor GTPase family. LepA subfamily.</text>
</comment>
<accession>C0R5S3</accession>
<dbReference type="EC" id="3.6.5.n1" evidence="1"/>
<dbReference type="EMBL" id="CP001391">
    <property type="protein sequence ID" value="ACN95115.1"/>
    <property type="molecule type" value="Genomic_DNA"/>
</dbReference>
<dbReference type="RefSeq" id="WP_007549283.1">
    <property type="nucleotide sequence ID" value="NZ_MKIF01000116.1"/>
</dbReference>
<dbReference type="SMR" id="C0R5S3"/>
<dbReference type="STRING" id="66084.WRi_002950"/>
<dbReference type="KEGG" id="wri:WRi_002950"/>
<dbReference type="HOGENOM" id="CLU_009995_3_3_5"/>
<dbReference type="Proteomes" id="UP000001293">
    <property type="component" value="Chromosome"/>
</dbReference>
<dbReference type="GO" id="GO:0005886">
    <property type="term" value="C:plasma membrane"/>
    <property type="evidence" value="ECO:0007669"/>
    <property type="project" value="UniProtKB-SubCell"/>
</dbReference>
<dbReference type="GO" id="GO:0005525">
    <property type="term" value="F:GTP binding"/>
    <property type="evidence" value="ECO:0007669"/>
    <property type="project" value="UniProtKB-UniRule"/>
</dbReference>
<dbReference type="GO" id="GO:0003924">
    <property type="term" value="F:GTPase activity"/>
    <property type="evidence" value="ECO:0007669"/>
    <property type="project" value="UniProtKB-UniRule"/>
</dbReference>
<dbReference type="GO" id="GO:0097216">
    <property type="term" value="F:guanosine tetraphosphate binding"/>
    <property type="evidence" value="ECO:0007669"/>
    <property type="project" value="UniProtKB-ARBA"/>
</dbReference>
<dbReference type="GO" id="GO:0043022">
    <property type="term" value="F:ribosome binding"/>
    <property type="evidence" value="ECO:0007669"/>
    <property type="project" value="UniProtKB-UniRule"/>
</dbReference>
<dbReference type="GO" id="GO:0003746">
    <property type="term" value="F:translation elongation factor activity"/>
    <property type="evidence" value="ECO:0007669"/>
    <property type="project" value="UniProtKB-UniRule"/>
</dbReference>
<dbReference type="GO" id="GO:0045727">
    <property type="term" value="P:positive regulation of translation"/>
    <property type="evidence" value="ECO:0007669"/>
    <property type="project" value="UniProtKB-UniRule"/>
</dbReference>
<dbReference type="CDD" id="cd03699">
    <property type="entry name" value="EF4_II"/>
    <property type="match status" value="1"/>
</dbReference>
<dbReference type="CDD" id="cd16260">
    <property type="entry name" value="EF4_III"/>
    <property type="match status" value="1"/>
</dbReference>
<dbReference type="CDD" id="cd01890">
    <property type="entry name" value="LepA"/>
    <property type="match status" value="1"/>
</dbReference>
<dbReference type="CDD" id="cd03709">
    <property type="entry name" value="lepA_C"/>
    <property type="match status" value="1"/>
</dbReference>
<dbReference type="FunFam" id="3.40.50.300:FF:000078">
    <property type="entry name" value="Elongation factor 4"/>
    <property type="match status" value="1"/>
</dbReference>
<dbReference type="FunFam" id="2.40.30.10:FF:000015">
    <property type="entry name" value="Translation factor GUF1, mitochondrial"/>
    <property type="match status" value="1"/>
</dbReference>
<dbReference type="FunFam" id="3.30.70.240:FF:000007">
    <property type="entry name" value="Translation factor GUF1, mitochondrial"/>
    <property type="match status" value="1"/>
</dbReference>
<dbReference type="FunFam" id="3.30.70.2570:FF:000001">
    <property type="entry name" value="Translation factor GUF1, mitochondrial"/>
    <property type="match status" value="1"/>
</dbReference>
<dbReference type="FunFam" id="3.30.70.870:FF:000004">
    <property type="entry name" value="Translation factor GUF1, mitochondrial"/>
    <property type="match status" value="1"/>
</dbReference>
<dbReference type="Gene3D" id="3.30.70.240">
    <property type="match status" value="1"/>
</dbReference>
<dbReference type="Gene3D" id="3.30.70.2570">
    <property type="entry name" value="Elongation factor 4, C-terminal domain"/>
    <property type="match status" value="1"/>
</dbReference>
<dbReference type="Gene3D" id="3.30.70.870">
    <property type="entry name" value="Elongation Factor G (Translational Gtpase), domain 3"/>
    <property type="match status" value="1"/>
</dbReference>
<dbReference type="Gene3D" id="3.40.50.300">
    <property type="entry name" value="P-loop containing nucleotide triphosphate hydrolases"/>
    <property type="match status" value="1"/>
</dbReference>
<dbReference type="Gene3D" id="2.40.30.10">
    <property type="entry name" value="Translation factors"/>
    <property type="match status" value="1"/>
</dbReference>
<dbReference type="HAMAP" id="MF_00071">
    <property type="entry name" value="LepA"/>
    <property type="match status" value="1"/>
</dbReference>
<dbReference type="InterPro" id="IPR006297">
    <property type="entry name" value="EF-4"/>
</dbReference>
<dbReference type="InterPro" id="IPR041095">
    <property type="entry name" value="EFG_II"/>
</dbReference>
<dbReference type="InterPro" id="IPR035647">
    <property type="entry name" value="EFG_III/V"/>
</dbReference>
<dbReference type="InterPro" id="IPR000640">
    <property type="entry name" value="EFG_V-like"/>
</dbReference>
<dbReference type="InterPro" id="IPR004161">
    <property type="entry name" value="EFTu-like_2"/>
</dbReference>
<dbReference type="InterPro" id="IPR031157">
    <property type="entry name" value="G_TR_CS"/>
</dbReference>
<dbReference type="InterPro" id="IPR038363">
    <property type="entry name" value="LepA_C_sf"/>
</dbReference>
<dbReference type="InterPro" id="IPR013842">
    <property type="entry name" value="LepA_CTD"/>
</dbReference>
<dbReference type="InterPro" id="IPR035654">
    <property type="entry name" value="LepA_IV"/>
</dbReference>
<dbReference type="InterPro" id="IPR027417">
    <property type="entry name" value="P-loop_NTPase"/>
</dbReference>
<dbReference type="InterPro" id="IPR005225">
    <property type="entry name" value="Small_GTP-bd"/>
</dbReference>
<dbReference type="InterPro" id="IPR000795">
    <property type="entry name" value="T_Tr_GTP-bd_dom"/>
</dbReference>
<dbReference type="InterPro" id="IPR009000">
    <property type="entry name" value="Transl_B-barrel_sf"/>
</dbReference>
<dbReference type="NCBIfam" id="TIGR01393">
    <property type="entry name" value="lepA"/>
    <property type="match status" value="1"/>
</dbReference>
<dbReference type="NCBIfam" id="TIGR00231">
    <property type="entry name" value="small_GTP"/>
    <property type="match status" value="1"/>
</dbReference>
<dbReference type="PANTHER" id="PTHR43512:SF4">
    <property type="entry name" value="TRANSLATION FACTOR GUF1 HOMOLOG, CHLOROPLASTIC"/>
    <property type="match status" value="1"/>
</dbReference>
<dbReference type="PANTHER" id="PTHR43512">
    <property type="entry name" value="TRANSLATION FACTOR GUF1-RELATED"/>
    <property type="match status" value="1"/>
</dbReference>
<dbReference type="Pfam" id="PF00679">
    <property type="entry name" value="EFG_C"/>
    <property type="match status" value="1"/>
</dbReference>
<dbReference type="Pfam" id="PF14492">
    <property type="entry name" value="EFG_III"/>
    <property type="match status" value="1"/>
</dbReference>
<dbReference type="Pfam" id="PF00009">
    <property type="entry name" value="GTP_EFTU"/>
    <property type="match status" value="1"/>
</dbReference>
<dbReference type="Pfam" id="PF03144">
    <property type="entry name" value="GTP_EFTU_D2"/>
    <property type="match status" value="1"/>
</dbReference>
<dbReference type="Pfam" id="PF06421">
    <property type="entry name" value="LepA_C"/>
    <property type="match status" value="1"/>
</dbReference>
<dbReference type="PRINTS" id="PR00315">
    <property type="entry name" value="ELONGATNFCT"/>
</dbReference>
<dbReference type="SUPFAM" id="SSF54980">
    <property type="entry name" value="EF-G C-terminal domain-like"/>
    <property type="match status" value="2"/>
</dbReference>
<dbReference type="SUPFAM" id="SSF52540">
    <property type="entry name" value="P-loop containing nucleoside triphosphate hydrolases"/>
    <property type="match status" value="1"/>
</dbReference>
<dbReference type="SUPFAM" id="SSF50447">
    <property type="entry name" value="Translation proteins"/>
    <property type="match status" value="1"/>
</dbReference>
<dbReference type="PROSITE" id="PS00301">
    <property type="entry name" value="G_TR_1"/>
    <property type="match status" value="1"/>
</dbReference>
<dbReference type="PROSITE" id="PS51722">
    <property type="entry name" value="G_TR_2"/>
    <property type="match status" value="1"/>
</dbReference>
<organism>
    <name type="scientific">Wolbachia sp. subsp. Drosophila simulans (strain wRi)</name>
    <dbReference type="NCBI Taxonomy" id="66084"/>
    <lineage>
        <taxon>Bacteria</taxon>
        <taxon>Pseudomonadati</taxon>
        <taxon>Pseudomonadota</taxon>
        <taxon>Alphaproteobacteria</taxon>
        <taxon>Rickettsiales</taxon>
        <taxon>Anaplasmataceae</taxon>
        <taxon>Wolbachieae</taxon>
        <taxon>Wolbachia</taxon>
    </lineage>
</organism>
<keyword id="KW-1003">Cell membrane</keyword>
<keyword id="KW-0342">GTP-binding</keyword>
<keyword id="KW-0378">Hydrolase</keyword>
<keyword id="KW-0472">Membrane</keyword>
<keyword id="KW-0547">Nucleotide-binding</keyword>
<keyword id="KW-0648">Protein biosynthesis</keyword>